<reference key="1">
    <citation type="submission" date="2008-02" db="EMBL/GenBank/DDBJ databases">
        <title>Complete sequence of Synechococcus sp. PCC 7002.</title>
        <authorList>
            <person name="Li T."/>
            <person name="Zhao J."/>
            <person name="Zhao C."/>
            <person name="Liu Z."/>
            <person name="Zhao F."/>
            <person name="Marquardt J."/>
            <person name="Nomura C.T."/>
            <person name="Persson S."/>
            <person name="Detter J.C."/>
            <person name="Richardson P.M."/>
            <person name="Lanz C."/>
            <person name="Schuster S.C."/>
            <person name="Wang J."/>
            <person name="Li S."/>
            <person name="Huang X."/>
            <person name="Cai T."/>
            <person name="Yu Z."/>
            <person name="Luo J."/>
            <person name="Zhao J."/>
            <person name="Bryant D.A."/>
        </authorList>
    </citation>
    <scope>NUCLEOTIDE SEQUENCE [LARGE SCALE GENOMIC DNA]</scope>
    <source>
        <strain>ATCC 27264 / PCC 7002 / PR-6</strain>
    </source>
</reference>
<keyword id="KW-0143">Chaperone</keyword>
<keyword id="KW-0963">Cytoplasm</keyword>
<keyword id="KW-1185">Reference proteome</keyword>
<keyword id="KW-0690">Ribosome biogenesis</keyword>
<keyword id="KW-0698">rRNA processing</keyword>
<dbReference type="EMBL" id="CP000951">
    <property type="protein sequence ID" value="ACA99243.1"/>
    <property type="molecule type" value="Genomic_DNA"/>
</dbReference>
<dbReference type="RefSeq" id="WP_012306866.1">
    <property type="nucleotide sequence ID" value="NZ_JAHHPU010000001.1"/>
</dbReference>
<dbReference type="SMR" id="B1XKY8"/>
<dbReference type="STRING" id="32049.SYNPCC7002_A1245"/>
<dbReference type="KEGG" id="syp:SYNPCC7002_A1245"/>
<dbReference type="eggNOG" id="COG0806">
    <property type="taxonomic scope" value="Bacteria"/>
</dbReference>
<dbReference type="HOGENOM" id="CLU_077636_3_0_3"/>
<dbReference type="Proteomes" id="UP000001688">
    <property type="component" value="Chromosome"/>
</dbReference>
<dbReference type="GO" id="GO:0005737">
    <property type="term" value="C:cytoplasm"/>
    <property type="evidence" value="ECO:0007669"/>
    <property type="project" value="UniProtKB-SubCell"/>
</dbReference>
<dbReference type="GO" id="GO:0005840">
    <property type="term" value="C:ribosome"/>
    <property type="evidence" value="ECO:0007669"/>
    <property type="project" value="InterPro"/>
</dbReference>
<dbReference type="GO" id="GO:0043022">
    <property type="term" value="F:ribosome binding"/>
    <property type="evidence" value="ECO:0007669"/>
    <property type="project" value="InterPro"/>
</dbReference>
<dbReference type="GO" id="GO:0042274">
    <property type="term" value="P:ribosomal small subunit biogenesis"/>
    <property type="evidence" value="ECO:0007669"/>
    <property type="project" value="UniProtKB-UniRule"/>
</dbReference>
<dbReference type="GO" id="GO:0006364">
    <property type="term" value="P:rRNA processing"/>
    <property type="evidence" value="ECO:0007669"/>
    <property type="project" value="UniProtKB-UniRule"/>
</dbReference>
<dbReference type="Gene3D" id="2.30.30.240">
    <property type="entry name" value="PRC-barrel domain"/>
    <property type="match status" value="1"/>
</dbReference>
<dbReference type="Gene3D" id="2.40.30.60">
    <property type="entry name" value="RimM"/>
    <property type="match status" value="1"/>
</dbReference>
<dbReference type="HAMAP" id="MF_00014">
    <property type="entry name" value="Ribosome_mat_RimM"/>
    <property type="match status" value="1"/>
</dbReference>
<dbReference type="InterPro" id="IPR011033">
    <property type="entry name" value="PRC_barrel-like_sf"/>
</dbReference>
<dbReference type="InterPro" id="IPR056792">
    <property type="entry name" value="PRC_RimM"/>
</dbReference>
<dbReference type="InterPro" id="IPR011961">
    <property type="entry name" value="RimM"/>
</dbReference>
<dbReference type="InterPro" id="IPR002676">
    <property type="entry name" value="RimM_N"/>
</dbReference>
<dbReference type="InterPro" id="IPR036976">
    <property type="entry name" value="RimM_N_sf"/>
</dbReference>
<dbReference type="InterPro" id="IPR009000">
    <property type="entry name" value="Transl_B-barrel_sf"/>
</dbReference>
<dbReference type="NCBIfam" id="TIGR02273">
    <property type="entry name" value="16S_RimM"/>
    <property type="match status" value="1"/>
</dbReference>
<dbReference type="PANTHER" id="PTHR33692">
    <property type="entry name" value="RIBOSOME MATURATION FACTOR RIMM"/>
    <property type="match status" value="1"/>
</dbReference>
<dbReference type="PANTHER" id="PTHR33692:SF1">
    <property type="entry name" value="RIBOSOME MATURATION FACTOR RIMM"/>
    <property type="match status" value="1"/>
</dbReference>
<dbReference type="Pfam" id="PF24986">
    <property type="entry name" value="PRC_RimM"/>
    <property type="match status" value="1"/>
</dbReference>
<dbReference type="Pfam" id="PF01782">
    <property type="entry name" value="RimM"/>
    <property type="match status" value="1"/>
</dbReference>
<dbReference type="SUPFAM" id="SSF50346">
    <property type="entry name" value="PRC-barrel domain"/>
    <property type="match status" value="1"/>
</dbReference>
<dbReference type="SUPFAM" id="SSF50447">
    <property type="entry name" value="Translation proteins"/>
    <property type="match status" value="1"/>
</dbReference>
<sequence>MAEQDWIIIGQVVAAQGLKGEVRINPSTDFPERFEVPGQRWLQLPNQDPQSVELERGRQIPGKNLFVVKFEHIQDRTQAENIRGAKVLVRAGDRPELEADEYHVSDLIGLEVFDYNTQAKLGIVSDLYTAAQDVLEVTDANQKKHLVPFVKAIVPVVDLVENRLEVDAPPGLFEI</sequence>
<name>RIMM_PICP2</name>
<organism>
    <name type="scientific">Picosynechococcus sp. (strain ATCC 27264 / PCC 7002 / PR-6)</name>
    <name type="common">Agmenellum quadruplicatum</name>
    <dbReference type="NCBI Taxonomy" id="32049"/>
    <lineage>
        <taxon>Bacteria</taxon>
        <taxon>Bacillati</taxon>
        <taxon>Cyanobacteriota</taxon>
        <taxon>Cyanophyceae</taxon>
        <taxon>Oscillatoriophycideae</taxon>
        <taxon>Chroococcales</taxon>
        <taxon>Geminocystaceae</taxon>
        <taxon>Picosynechococcus</taxon>
    </lineage>
</organism>
<protein>
    <recommendedName>
        <fullName evidence="1">Ribosome maturation factor RimM</fullName>
    </recommendedName>
</protein>
<gene>
    <name evidence="1" type="primary">rimM</name>
    <name type="ordered locus">SYNPCC7002_A1245</name>
</gene>
<proteinExistence type="inferred from homology"/>
<evidence type="ECO:0000255" key="1">
    <source>
        <dbReference type="HAMAP-Rule" id="MF_00014"/>
    </source>
</evidence>
<comment type="function">
    <text evidence="1">An accessory protein needed during the final step in the assembly of 30S ribosomal subunit, possibly for assembly of the head region. Essential for efficient processing of 16S rRNA. May be needed both before and after RbfA during the maturation of 16S rRNA. It has affinity for free ribosomal 30S subunits but not for 70S ribosomes.</text>
</comment>
<comment type="subunit">
    <text evidence="1">Binds ribosomal protein uS19.</text>
</comment>
<comment type="subcellular location">
    <subcellularLocation>
        <location evidence="1">Cytoplasm</location>
    </subcellularLocation>
</comment>
<comment type="domain">
    <text evidence="1">The PRC barrel domain binds ribosomal protein uS19.</text>
</comment>
<comment type="similarity">
    <text evidence="1">Belongs to the RimM family.</text>
</comment>
<accession>B1XKY8</accession>
<feature type="chain" id="PRO_0000351800" description="Ribosome maturation factor RimM">
    <location>
        <begin position="1"/>
        <end position="175"/>
    </location>
</feature>
<feature type="domain" description="PRC barrel" evidence="1">
    <location>
        <begin position="99"/>
        <end position="172"/>
    </location>
</feature>